<dbReference type="EMBL" id="DQ226511">
    <property type="protein sequence ID" value="ABB20994.1"/>
    <property type="molecule type" value="Genomic_DNA"/>
</dbReference>
<dbReference type="RefSeq" id="YP_762298.1">
    <property type="nucleotide sequence ID" value="NC_008359.1"/>
</dbReference>
<dbReference type="SMR" id="Q09WY0"/>
<dbReference type="GeneID" id="4290634"/>
<dbReference type="GO" id="GO:0009507">
    <property type="term" value="C:chloroplast"/>
    <property type="evidence" value="ECO:0007669"/>
    <property type="project" value="UniProtKB-SubCell"/>
</dbReference>
<dbReference type="GO" id="GO:0005762">
    <property type="term" value="C:mitochondrial large ribosomal subunit"/>
    <property type="evidence" value="ECO:0007669"/>
    <property type="project" value="TreeGrafter"/>
</dbReference>
<dbReference type="GO" id="GO:0019843">
    <property type="term" value="F:rRNA binding"/>
    <property type="evidence" value="ECO:0007669"/>
    <property type="project" value="InterPro"/>
</dbReference>
<dbReference type="GO" id="GO:0003735">
    <property type="term" value="F:structural constituent of ribosome"/>
    <property type="evidence" value="ECO:0007669"/>
    <property type="project" value="InterPro"/>
</dbReference>
<dbReference type="GO" id="GO:0032543">
    <property type="term" value="P:mitochondrial translation"/>
    <property type="evidence" value="ECO:0007669"/>
    <property type="project" value="TreeGrafter"/>
</dbReference>
<dbReference type="CDD" id="cd01433">
    <property type="entry name" value="Ribosomal_L16_L10e"/>
    <property type="match status" value="1"/>
</dbReference>
<dbReference type="FunFam" id="3.90.1170.10:FF:000001">
    <property type="entry name" value="50S ribosomal protein L16"/>
    <property type="match status" value="1"/>
</dbReference>
<dbReference type="Gene3D" id="3.90.1170.10">
    <property type="entry name" value="Ribosomal protein L10e/L16"/>
    <property type="match status" value="1"/>
</dbReference>
<dbReference type="HAMAP" id="MF_01342">
    <property type="entry name" value="Ribosomal_uL16"/>
    <property type="match status" value="1"/>
</dbReference>
<dbReference type="InterPro" id="IPR047873">
    <property type="entry name" value="Ribosomal_uL16"/>
</dbReference>
<dbReference type="InterPro" id="IPR000114">
    <property type="entry name" value="Ribosomal_uL16_bact-type"/>
</dbReference>
<dbReference type="InterPro" id="IPR020798">
    <property type="entry name" value="Ribosomal_uL16_CS"/>
</dbReference>
<dbReference type="InterPro" id="IPR016180">
    <property type="entry name" value="Ribosomal_uL16_dom"/>
</dbReference>
<dbReference type="InterPro" id="IPR036920">
    <property type="entry name" value="Ribosomal_uL16_sf"/>
</dbReference>
<dbReference type="NCBIfam" id="TIGR01164">
    <property type="entry name" value="rplP_bact"/>
    <property type="match status" value="1"/>
</dbReference>
<dbReference type="PANTHER" id="PTHR12220">
    <property type="entry name" value="50S/60S RIBOSOMAL PROTEIN L16"/>
    <property type="match status" value="1"/>
</dbReference>
<dbReference type="PANTHER" id="PTHR12220:SF13">
    <property type="entry name" value="LARGE RIBOSOMAL SUBUNIT PROTEIN UL16M"/>
    <property type="match status" value="1"/>
</dbReference>
<dbReference type="Pfam" id="PF00252">
    <property type="entry name" value="Ribosomal_L16"/>
    <property type="match status" value="1"/>
</dbReference>
<dbReference type="PRINTS" id="PR00060">
    <property type="entry name" value="RIBOSOMALL16"/>
</dbReference>
<dbReference type="SUPFAM" id="SSF54686">
    <property type="entry name" value="Ribosomal protein L16p/L10e"/>
    <property type="match status" value="1"/>
</dbReference>
<dbReference type="PROSITE" id="PS00586">
    <property type="entry name" value="RIBOSOMAL_L16_1"/>
    <property type="match status" value="1"/>
</dbReference>
<dbReference type="PROSITE" id="PS00701">
    <property type="entry name" value="RIBOSOMAL_L16_2"/>
    <property type="match status" value="1"/>
</dbReference>
<keyword id="KW-0150">Chloroplast</keyword>
<keyword id="KW-0934">Plastid</keyword>
<keyword id="KW-0687">Ribonucleoprotein</keyword>
<keyword id="KW-0689">Ribosomal protein</keyword>
<comment type="subunit">
    <text evidence="1">Part of the 50S ribosomal subunit.</text>
</comment>
<comment type="subcellular location">
    <subcellularLocation>
        <location>Plastid</location>
        <location>Chloroplast</location>
    </subcellularLocation>
</comment>
<comment type="similarity">
    <text evidence="1">Belongs to the universal ribosomal protein uL16 family.</text>
</comment>
<evidence type="ECO:0000255" key="1">
    <source>
        <dbReference type="HAMAP-Rule" id="MF_01342"/>
    </source>
</evidence>
<evidence type="ECO:0000305" key="2"/>
<sequence length="135" mass="15362">MLSPKRTRFRKHHRGRMKGISYRGNHICFGRYALQALEPAWITSRQIEAGRRAMTRNARRGGKIWVRIFPDKPITVRPTETRMGSGKGSPEYWVAVVKPGRILYEMSGVPENIARKAIAIAASKMPIRTQFIISG</sequence>
<protein>
    <recommendedName>
        <fullName evidence="1">Large ribosomal subunit protein uL16c</fullName>
    </recommendedName>
    <alternativeName>
        <fullName evidence="2">50S ribosomal protein L16, chloroplastic</fullName>
    </alternativeName>
</protein>
<accession>Q09WY0</accession>
<feature type="chain" id="PRO_0000276386" description="Large ribosomal subunit protein uL16c">
    <location>
        <begin position="1"/>
        <end position="135"/>
    </location>
</feature>
<reference key="1">
    <citation type="submission" date="2005-09" db="EMBL/GenBank/DDBJ databases">
        <title>The chloroplast genome of mulberry: structural features and comparative analysis.</title>
        <authorList>
            <person name="Ravi V."/>
            <person name="Khurana J.P."/>
            <person name="Tyagi A.K."/>
            <person name="Khurana P."/>
        </authorList>
    </citation>
    <scope>NUCLEOTIDE SEQUENCE [LARGE SCALE GENOMIC DNA]</scope>
    <source>
        <strain>cv. K2</strain>
    </source>
</reference>
<proteinExistence type="inferred from homology"/>
<organism>
    <name type="scientific">Morus indica</name>
    <name type="common">Mulberry</name>
    <dbReference type="NCBI Taxonomy" id="248361"/>
    <lineage>
        <taxon>Eukaryota</taxon>
        <taxon>Viridiplantae</taxon>
        <taxon>Streptophyta</taxon>
        <taxon>Embryophyta</taxon>
        <taxon>Tracheophyta</taxon>
        <taxon>Spermatophyta</taxon>
        <taxon>Magnoliopsida</taxon>
        <taxon>eudicotyledons</taxon>
        <taxon>Gunneridae</taxon>
        <taxon>Pentapetalae</taxon>
        <taxon>rosids</taxon>
        <taxon>fabids</taxon>
        <taxon>Rosales</taxon>
        <taxon>Moraceae</taxon>
        <taxon>Moreae</taxon>
        <taxon>Morus</taxon>
    </lineage>
</organism>
<gene>
    <name evidence="1" type="primary">rpl16</name>
    <name type="ordered locus">MoinCp058</name>
</gene>
<geneLocation type="chloroplast"/>
<name>RK16_MORIN</name>